<keyword id="KW-0031">Aminopeptidase</keyword>
<keyword id="KW-0378">Hydrolase</keyword>
<keyword id="KW-0645">Protease</keyword>
<comment type="function">
    <text evidence="3">Releases the N-terminal proline from various substrates. Hydrolyzes only di- and tripeptides with proline in the first position.</text>
</comment>
<comment type="catalytic activity">
    <reaction evidence="3">
        <text>Release of N-terminal proline from a peptide.</text>
        <dbReference type="EC" id="3.4.11.5"/>
    </reaction>
</comment>
<comment type="biophysicochemical properties">
    <kinetics>
        <KM evidence="3">0.8 mM for Pro-pNA (at 40 degrees Celsius and pH 7.5)</KM>
        <Vmax evidence="3">350.0 mmol/min/mg enzyme with Pro-pNA as substrate</Vmax>
    </kinetics>
    <phDependence>
        <text evidence="3">Optimum pH is 7.5. At pH values above 7.5, the activity sharply decreases.</text>
    </phDependence>
    <temperatureDependence>
        <text evidence="3">Optimum activity at 40 degrees Celsius.</text>
    </temperatureDependence>
</comment>
<comment type="subunit">
    <text evidence="3">Homodimer.</text>
</comment>
<comment type="subcellular location">
    <subcellularLocation>
        <location evidence="4">Cell envelope</location>
    </subcellularLocation>
</comment>
<comment type="similarity">
    <text evidence="4">Belongs to the peptidase S33 family.</text>
</comment>
<feature type="chain" id="PRO_0000080838" description="Proline iminopeptidase">
    <location>
        <begin position="1"/>
        <end position="294"/>
    </location>
</feature>
<feature type="domain" description="AB hydrolase-1" evidence="2">
    <location>
        <begin position="27"/>
        <end position="277"/>
    </location>
</feature>
<feature type="active site" description="Nucleophile" evidence="1">
    <location>
        <position position="105"/>
    </location>
</feature>
<feature type="active site" evidence="1">
    <location>
        <position position="244"/>
    </location>
</feature>
<feature type="active site" description="Proton donor" evidence="1">
    <location>
        <position position="271"/>
    </location>
</feature>
<evidence type="ECO:0000250" key="1"/>
<evidence type="ECO:0000255" key="2"/>
<evidence type="ECO:0000269" key="3">
    <source>
    </source>
</evidence>
<evidence type="ECO:0000305" key="4"/>
<gene>
    <name type="primary">pip</name>
    <name type="synonym">pepI</name>
</gene>
<organism>
    <name type="scientific">Lactobacillus helveticus</name>
    <name type="common">Lactobacillus suntoryeus</name>
    <dbReference type="NCBI Taxonomy" id="1587"/>
    <lineage>
        <taxon>Bacteria</taxon>
        <taxon>Bacillati</taxon>
        <taxon>Bacillota</taxon>
        <taxon>Bacilli</taxon>
        <taxon>Lactobacillales</taxon>
        <taxon>Lactobacillaceae</taxon>
        <taxon>Lactobacillus</taxon>
    </lineage>
</organism>
<reference key="1">
    <citation type="journal article" date="1996" name="Microbiology">
        <title>An operon from Lactobacillus helveticus composed of a proline iminopeptidase gene (pepI) and two genes coding for putative members of the ABC transporter family of proteins.</title>
        <authorList>
            <person name="Varmanen P."/>
            <person name="Rantanen T."/>
            <person name="Palva A."/>
        </authorList>
    </citation>
    <scope>NUCLEOTIDE SEQUENCE [GENOMIC DNA]</scope>
    <scope>FUNCTION</scope>
    <scope>CATALYTIC ACTIVITY</scope>
    <scope>BIOPHYSICOCHEMICAL PROPERTIES</scope>
    <scope>SUBUNIT</scope>
    <source>
        <strain>53/7</strain>
    </source>
</reference>
<protein>
    <recommendedName>
        <fullName>Proline iminopeptidase</fullName>
        <shortName>PIP</shortName>
        <ecNumber>3.4.11.5</ecNumber>
    </recommendedName>
    <alternativeName>
        <fullName>Prolyl aminopeptidase</fullName>
        <shortName>PAP</shortName>
    </alternativeName>
</protein>
<proteinExistence type="evidence at protein level"/>
<accession>P52278</accession>
<dbReference type="EC" id="3.4.11.5"/>
<dbReference type="EMBL" id="Z56283">
    <property type="protein sequence ID" value="CAA91231.1"/>
    <property type="molecule type" value="Genomic_DNA"/>
</dbReference>
<dbReference type="RefSeq" id="WP_012211252.1">
    <property type="nucleotide sequence ID" value="NZ_WCGH01000028.1"/>
</dbReference>
<dbReference type="SMR" id="P52278"/>
<dbReference type="ESTHER" id="lache-pip">
    <property type="family name" value="Proline_iminopeptidase"/>
</dbReference>
<dbReference type="MEROPS" id="S33.021"/>
<dbReference type="eggNOG" id="COG2267">
    <property type="taxonomic scope" value="Bacteria"/>
</dbReference>
<dbReference type="OMA" id="WGPNEYT"/>
<dbReference type="OrthoDB" id="9796770at2"/>
<dbReference type="BRENDA" id="3.4.11.5">
    <property type="organism ID" value="2870"/>
</dbReference>
<dbReference type="SABIO-RK" id="P52278"/>
<dbReference type="GO" id="GO:0030313">
    <property type="term" value="C:cell envelope"/>
    <property type="evidence" value="ECO:0007669"/>
    <property type="project" value="UniProtKB-SubCell"/>
</dbReference>
<dbReference type="GO" id="GO:0016020">
    <property type="term" value="C:membrane"/>
    <property type="evidence" value="ECO:0007669"/>
    <property type="project" value="TreeGrafter"/>
</dbReference>
<dbReference type="GO" id="GO:0004177">
    <property type="term" value="F:aminopeptidase activity"/>
    <property type="evidence" value="ECO:0007669"/>
    <property type="project" value="UniProtKB-KW"/>
</dbReference>
<dbReference type="GO" id="GO:0006508">
    <property type="term" value="P:proteolysis"/>
    <property type="evidence" value="ECO:0007669"/>
    <property type="project" value="UniProtKB-KW"/>
</dbReference>
<dbReference type="Gene3D" id="3.40.50.1820">
    <property type="entry name" value="alpha/beta hydrolase"/>
    <property type="match status" value="1"/>
</dbReference>
<dbReference type="InterPro" id="IPR000073">
    <property type="entry name" value="AB_hydrolase_1"/>
</dbReference>
<dbReference type="InterPro" id="IPR029058">
    <property type="entry name" value="AB_hydrolase_fold"/>
</dbReference>
<dbReference type="InterPro" id="IPR050266">
    <property type="entry name" value="AB_hydrolase_sf"/>
</dbReference>
<dbReference type="InterPro" id="IPR002410">
    <property type="entry name" value="Peptidase_S33"/>
</dbReference>
<dbReference type="InterPro" id="IPR005945">
    <property type="entry name" value="Pro_imino_pep"/>
</dbReference>
<dbReference type="NCBIfam" id="TIGR01250">
    <property type="entry name" value="pro_imino_pep_2"/>
    <property type="match status" value="1"/>
</dbReference>
<dbReference type="NCBIfam" id="NF045945">
    <property type="entry name" value="ProImpepLactob"/>
    <property type="match status" value="1"/>
</dbReference>
<dbReference type="PANTHER" id="PTHR43798:SF33">
    <property type="entry name" value="HYDROLASE, PUTATIVE (AFU_ORTHOLOGUE AFUA_2G14860)-RELATED"/>
    <property type="match status" value="1"/>
</dbReference>
<dbReference type="PANTHER" id="PTHR43798">
    <property type="entry name" value="MONOACYLGLYCEROL LIPASE"/>
    <property type="match status" value="1"/>
</dbReference>
<dbReference type="Pfam" id="PF00561">
    <property type="entry name" value="Abhydrolase_1"/>
    <property type="match status" value="1"/>
</dbReference>
<dbReference type="PIRSF" id="PIRSF005539">
    <property type="entry name" value="Pept_S33_TRI_F1"/>
    <property type="match status" value="1"/>
</dbReference>
<dbReference type="PRINTS" id="PR00793">
    <property type="entry name" value="PROAMNOPTASE"/>
</dbReference>
<dbReference type="SUPFAM" id="SSF53474">
    <property type="entry name" value="alpha/beta-Hydrolases"/>
    <property type="match status" value="1"/>
</dbReference>
<name>PIP_LACHE</name>
<sequence>MEIIEGKMPFMGYETYYRIVGERSEKPPLVLLHGGPGSSHNYFEVLDELAQKDGRRIIMYDQLGCGESSIPDDHPELYTKETWVKELEALREHLALRKMHLLGQSWGGMLAIIYMCDYHPEGIQSLILSSTLSSASLWSKELHRMIKYLPIEEQAAIHRAELTGNFNDPDYLKANEHFMNQHAIDMTKTWPECVMRKKRGGTVAYETAWGPNEYTPEGNLHDYEYTDKLSKIKVPTLITSGTDDLCTPYVAKTMQDQIASSKWRLFEGCGHMSFVEKTDEYVALLQEWLDQHDE</sequence>